<dbReference type="EMBL" id="CP000409">
    <property type="protein sequence ID" value="ABV73676.1"/>
    <property type="molecule type" value="Genomic_DNA"/>
</dbReference>
<dbReference type="RefSeq" id="WP_012148871.1">
    <property type="nucleotide sequence ID" value="NC_009879.1"/>
</dbReference>
<dbReference type="SMR" id="A8EZ93"/>
<dbReference type="STRING" id="293613.A1E_03725"/>
<dbReference type="KEGG" id="rcm:A1E_03725"/>
<dbReference type="eggNOG" id="COG0806">
    <property type="taxonomic scope" value="Bacteria"/>
</dbReference>
<dbReference type="HOGENOM" id="CLU_077636_0_1_5"/>
<dbReference type="Proteomes" id="UP000007056">
    <property type="component" value="Chromosome"/>
</dbReference>
<dbReference type="GO" id="GO:0005737">
    <property type="term" value="C:cytoplasm"/>
    <property type="evidence" value="ECO:0007669"/>
    <property type="project" value="UniProtKB-SubCell"/>
</dbReference>
<dbReference type="GO" id="GO:0005840">
    <property type="term" value="C:ribosome"/>
    <property type="evidence" value="ECO:0007669"/>
    <property type="project" value="InterPro"/>
</dbReference>
<dbReference type="GO" id="GO:0043022">
    <property type="term" value="F:ribosome binding"/>
    <property type="evidence" value="ECO:0007669"/>
    <property type="project" value="InterPro"/>
</dbReference>
<dbReference type="GO" id="GO:0042274">
    <property type="term" value="P:ribosomal small subunit biogenesis"/>
    <property type="evidence" value="ECO:0007669"/>
    <property type="project" value="UniProtKB-UniRule"/>
</dbReference>
<dbReference type="GO" id="GO:0006364">
    <property type="term" value="P:rRNA processing"/>
    <property type="evidence" value="ECO:0007669"/>
    <property type="project" value="UniProtKB-UniRule"/>
</dbReference>
<dbReference type="Gene3D" id="2.30.30.240">
    <property type="entry name" value="PRC-barrel domain"/>
    <property type="match status" value="1"/>
</dbReference>
<dbReference type="Gene3D" id="2.40.30.60">
    <property type="entry name" value="RimM"/>
    <property type="match status" value="1"/>
</dbReference>
<dbReference type="HAMAP" id="MF_00014">
    <property type="entry name" value="Ribosome_mat_RimM"/>
    <property type="match status" value="1"/>
</dbReference>
<dbReference type="InterPro" id="IPR027275">
    <property type="entry name" value="PRC-brl_dom"/>
</dbReference>
<dbReference type="InterPro" id="IPR011033">
    <property type="entry name" value="PRC_barrel-like_sf"/>
</dbReference>
<dbReference type="InterPro" id="IPR011961">
    <property type="entry name" value="RimM"/>
</dbReference>
<dbReference type="InterPro" id="IPR002676">
    <property type="entry name" value="RimM_N"/>
</dbReference>
<dbReference type="InterPro" id="IPR036976">
    <property type="entry name" value="RimM_N_sf"/>
</dbReference>
<dbReference type="InterPro" id="IPR009000">
    <property type="entry name" value="Transl_B-barrel_sf"/>
</dbReference>
<dbReference type="NCBIfam" id="TIGR02273">
    <property type="entry name" value="16S_RimM"/>
    <property type="match status" value="1"/>
</dbReference>
<dbReference type="PANTHER" id="PTHR33692">
    <property type="entry name" value="RIBOSOME MATURATION FACTOR RIMM"/>
    <property type="match status" value="1"/>
</dbReference>
<dbReference type="PANTHER" id="PTHR33692:SF1">
    <property type="entry name" value="RIBOSOME MATURATION FACTOR RIMM"/>
    <property type="match status" value="1"/>
</dbReference>
<dbReference type="Pfam" id="PF05239">
    <property type="entry name" value="PRC"/>
    <property type="match status" value="1"/>
</dbReference>
<dbReference type="Pfam" id="PF01782">
    <property type="entry name" value="RimM"/>
    <property type="match status" value="1"/>
</dbReference>
<dbReference type="SUPFAM" id="SSF50346">
    <property type="entry name" value="PRC-barrel domain"/>
    <property type="match status" value="1"/>
</dbReference>
<dbReference type="SUPFAM" id="SSF50447">
    <property type="entry name" value="Translation proteins"/>
    <property type="match status" value="1"/>
</dbReference>
<sequence>MNSLENLILVGVIKSCHGIKGHIILKSFTIPTTKILERNLVNESQENINIKLISQNAKGELICTFNDISTRNEAENLKGYKLFCLRASLPELEEDEFYIADLNHLTILDQDHKKVGKIKNILNFGAGDIIEIEFLDQTTELLPFNKQFFPVITKNYGILNYKREV</sequence>
<name>RIMM_RICCK</name>
<comment type="function">
    <text evidence="1">An accessory protein needed during the final step in the assembly of 30S ribosomal subunit, possibly for assembly of the head region. Essential for efficient processing of 16S rRNA. May be needed both before and after RbfA during the maturation of 16S rRNA. It has affinity for free ribosomal 30S subunits but not for 70S ribosomes.</text>
</comment>
<comment type="subunit">
    <text evidence="1">Binds ribosomal protein uS19.</text>
</comment>
<comment type="subcellular location">
    <subcellularLocation>
        <location evidence="1">Cytoplasm</location>
    </subcellularLocation>
</comment>
<comment type="domain">
    <text evidence="1">The PRC barrel domain binds ribosomal protein uS19.</text>
</comment>
<comment type="similarity">
    <text evidence="1">Belongs to the RimM family.</text>
</comment>
<gene>
    <name evidence="1" type="primary">rimM</name>
    <name type="ordered locus">A1E_03725</name>
</gene>
<organism>
    <name type="scientific">Rickettsia canadensis (strain McKiel)</name>
    <dbReference type="NCBI Taxonomy" id="293613"/>
    <lineage>
        <taxon>Bacteria</taxon>
        <taxon>Pseudomonadati</taxon>
        <taxon>Pseudomonadota</taxon>
        <taxon>Alphaproteobacteria</taxon>
        <taxon>Rickettsiales</taxon>
        <taxon>Rickettsiaceae</taxon>
        <taxon>Rickettsieae</taxon>
        <taxon>Rickettsia</taxon>
        <taxon>belli group</taxon>
    </lineage>
</organism>
<feature type="chain" id="PRO_1000001228" description="Ribosome maturation factor RimM">
    <location>
        <begin position="1"/>
        <end position="165"/>
    </location>
</feature>
<feature type="domain" description="PRC barrel" evidence="1">
    <location>
        <begin position="94"/>
        <end position="165"/>
    </location>
</feature>
<reference key="1">
    <citation type="submission" date="2007-09" db="EMBL/GenBank/DDBJ databases">
        <title>Complete genome sequence of Rickettsia canadensis.</title>
        <authorList>
            <person name="Madan A."/>
            <person name="Fahey J."/>
            <person name="Helton E."/>
            <person name="Ketteman M."/>
            <person name="Madan A."/>
            <person name="Rodrigues S."/>
            <person name="Sanchez A."/>
            <person name="Whiting M."/>
            <person name="Dasch G."/>
            <person name="Eremeeva M."/>
        </authorList>
    </citation>
    <scope>NUCLEOTIDE SEQUENCE [LARGE SCALE GENOMIC DNA]</scope>
    <source>
        <strain>McKiel</strain>
    </source>
</reference>
<evidence type="ECO:0000255" key="1">
    <source>
        <dbReference type="HAMAP-Rule" id="MF_00014"/>
    </source>
</evidence>
<keyword id="KW-0143">Chaperone</keyword>
<keyword id="KW-0963">Cytoplasm</keyword>
<keyword id="KW-0690">Ribosome biogenesis</keyword>
<keyword id="KW-0698">rRNA processing</keyword>
<proteinExistence type="inferred from homology"/>
<accession>A8EZ93</accession>
<protein>
    <recommendedName>
        <fullName evidence="1">Ribosome maturation factor RimM</fullName>
    </recommendedName>
</protein>